<dbReference type="EMBL" id="CP001339">
    <property type="protein sequence ID" value="ACL72011.1"/>
    <property type="molecule type" value="Genomic_DNA"/>
</dbReference>
<dbReference type="RefSeq" id="WP_012637496.1">
    <property type="nucleotide sequence ID" value="NC_011901.1"/>
</dbReference>
<dbReference type="SMR" id="B8GNS2"/>
<dbReference type="STRING" id="396588.Tgr7_0923"/>
<dbReference type="KEGG" id="tgr:Tgr7_0923"/>
<dbReference type="eggNOG" id="COG0360">
    <property type="taxonomic scope" value="Bacteria"/>
</dbReference>
<dbReference type="HOGENOM" id="CLU_113441_6_0_6"/>
<dbReference type="OrthoDB" id="9812702at2"/>
<dbReference type="Proteomes" id="UP000002383">
    <property type="component" value="Chromosome"/>
</dbReference>
<dbReference type="GO" id="GO:0022627">
    <property type="term" value="C:cytosolic small ribosomal subunit"/>
    <property type="evidence" value="ECO:0007669"/>
    <property type="project" value="TreeGrafter"/>
</dbReference>
<dbReference type="GO" id="GO:0070181">
    <property type="term" value="F:small ribosomal subunit rRNA binding"/>
    <property type="evidence" value="ECO:0007669"/>
    <property type="project" value="TreeGrafter"/>
</dbReference>
<dbReference type="GO" id="GO:0003735">
    <property type="term" value="F:structural constituent of ribosome"/>
    <property type="evidence" value="ECO:0007669"/>
    <property type="project" value="InterPro"/>
</dbReference>
<dbReference type="GO" id="GO:0006412">
    <property type="term" value="P:translation"/>
    <property type="evidence" value="ECO:0007669"/>
    <property type="project" value="UniProtKB-UniRule"/>
</dbReference>
<dbReference type="CDD" id="cd00473">
    <property type="entry name" value="bS6"/>
    <property type="match status" value="1"/>
</dbReference>
<dbReference type="Gene3D" id="3.30.70.60">
    <property type="match status" value="1"/>
</dbReference>
<dbReference type="HAMAP" id="MF_00360">
    <property type="entry name" value="Ribosomal_bS6"/>
    <property type="match status" value="1"/>
</dbReference>
<dbReference type="InterPro" id="IPR000529">
    <property type="entry name" value="Ribosomal_bS6"/>
</dbReference>
<dbReference type="InterPro" id="IPR020815">
    <property type="entry name" value="Ribosomal_bS6_CS"/>
</dbReference>
<dbReference type="InterPro" id="IPR035980">
    <property type="entry name" value="Ribosomal_bS6_sf"/>
</dbReference>
<dbReference type="InterPro" id="IPR020814">
    <property type="entry name" value="Ribosomal_S6_plastid/chlpt"/>
</dbReference>
<dbReference type="InterPro" id="IPR014717">
    <property type="entry name" value="Transl_elong_EF1B/ribsomal_bS6"/>
</dbReference>
<dbReference type="NCBIfam" id="TIGR00166">
    <property type="entry name" value="S6"/>
    <property type="match status" value="1"/>
</dbReference>
<dbReference type="PANTHER" id="PTHR21011">
    <property type="entry name" value="MITOCHONDRIAL 28S RIBOSOMAL PROTEIN S6"/>
    <property type="match status" value="1"/>
</dbReference>
<dbReference type="PANTHER" id="PTHR21011:SF1">
    <property type="entry name" value="SMALL RIBOSOMAL SUBUNIT PROTEIN BS6M"/>
    <property type="match status" value="1"/>
</dbReference>
<dbReference type="Pfam" id="PF01250">
    <property type="entry name" value="Ribosomal_S6"/>
    <property type="match status" value="1"/>
</dbReference>
<dbReference type="SUPFAM" id="SSF54995">
    <property type="entry name" value="Ribosomal protein S6"/>
    <property type="match status" value="1"/>
</dbReference>
<dbReference type="PROSITE" id="PS01048">
    <property type="entry name" value="RIBOSOMAL_S6"/>
    <property type="match status" value="1"/>
</dbReference>
<comment type="function">
    <text evidence="1">Binds together with bS18 to 16S ribosomal RNA.</text>
</comment>
<comment type="similarity">
    <text evidence="1">Belongs to the bacterial ribosomal protein bS6 family.</text>
</comment>
<keyword id="KW-1185">Reference proteome</keyword>
<keyword id="KW-0687">Ribonucleoprotein</keyword>
<keyword id="KW-0689">Ribosomal protein</keyword>
<keyword id="KW-0694">RNA-binding</keyword>
<keyword id="KW-0699">rRNA-binding</keyword>
<accession>B8GNS2</accession>
<protein>
    <recommendedName>
        <fullName evidence="1">Small ribosomal subunit protein bS6</fullName>
    </recommendedName>
    <alternativeName>
        <fullName evidence="3">30S ribosomal protein S6</fullName>
    </alternativeName>
</protein>
<feature type="chain" id="PRO_1000133553" description="Small ribosomal subunit protein bS6">
    <location>
        <begin position="1"/>
        <end position="138"/>
    </location>
</feature>
<feature type="region of interest" description="Disordered" evidence="2">
    <location>
        <begin position="100"/>
        <end position="138"/>
    </location>
</feature>
<feature type="compositionally biased region" description="Acidic residues" evidence="2">
    <location>
        <begin position="121"/>
        <end position="131"/>
    </location>
</feature>
<organism>
    <name type="scientific">Thioalkalivibrio sulfidiphilus (strain HL-EbGR7)</name>
    <dbReference type="NCBI Taxonomy" id="396588"/>
    <lineage>
        <taxon>Bacteria</taxon>
        <taxon>Pseudomonadati</taxon>
        <taxon>Pseudomonadota</taxon>
        <taxon>Gammaproteobacteria</taxon>
        <taxon>Chromatiales</taxon>
        <taxon>Ectothiorhodospiraceae</taxon>
        <taxon>Thioalkalivibrio</taxon>
    </lineage>
</organism>
<evidence type="ECO:0000255" key="1">
    <source>
        <dbReference type="HAMAP-Rule" id="MF_00360"/>
    </source>
</evidence>
<evidence type="ECO:0000256" key="2">
    <source>
        <dbReference type="SAM" id="MobiDB-lite"/>
    </source>
</evidence>
<evidence type="ECO:0000305" key="3"/>
<name>RS6_THISH</name>
<gene>
    <name evidence="1" type="primary">rpsF</name>
    <name type="ordered locus">Tgr7_0923</name>
</gene>
<sequence length="138" mass="15811">MRHYEIVFMVHPDQSEQVSAMIERYRGLIEGDGGKIHRLEDWGRRQLAYPINKIHKAHYVLMNVECGEAALAELVSAFRFNDAVIRHMVMLMERAFTEASPLAKGREEDDSDSSARRARDDSDDDGDDDEDDRRASAD</sequence>
<proteinExistence type="inferred from homology"/>
<reference key="1">
    <citation type="journal article" date="2011" name="Stand. Genomic Sci.">
        <title>Complete genome sequence of 'Thioalkalivibrio sulfidophilus' HL-EbGr7.</title>
        <authorList>
            <person name="Muyzer G."/>
            <person name="Sorokin D.Y."/>
            <person name="Mavromatis K."/>
            <person name="Lapidus A."/>
            <person name="Clum A."/>
            <person name="Ivanova N."/>
            <person name="Pati A."/>
            <person name="d'Haeseleer P."/>
            <person name="Woyke T."/>
            <person name="Kyrpides N.C."/>
        </authorList>
    </citation>
    <scope>NUCLEOTIDE SEQUENCE [LARGE SCALE GENOMIC DNA]</scope>
    <source>
        <strain>HL-EbGR7</strain>
    </source>
</reference>